<gene>
    <name evidence="1" type="primary">rpsP</name>
    <name type="ordered locus">Sputw3181_2996</name>
</gene>
<accession>A1RMB8</accession>
<comment type="similarity">
    <text evidence="1">Belongs to the bacterial ribosomal protein bS16 family.</text>
</comment>
<organism>
    <name type="scientific">Shewanella sp. (strain W3-18-1)</name>
    <dbReference type="NCBI Taxonomy" id="351745"/>
    <lineage>
        <taxon>Bacteria</taxon>
        <taxon>Pseudomonadati</taxon>
        <taxon>Pseudomonadota</taxon>
        <taxon>Gammaproteobacteria</taxon>
        <taxon>Alteromonadales</taxon>
        <taxon>Shewanellaceae</taxon>
        <taxon>Shewanella</taxon>
    </lineage>
</organism>
<reference key="1">
    <citation type="submission" date="2006-12" db="EMBL/GenBank/DDBJ databases">
        <title>Complete sequence of Shewanella sp. W3-18-1.</title>
        <authorList>
            <consortium name="US DOE Joint Genome Institute"/>
            <person name="Copeland A."/>
            <person name="Lucas S."/>
            <person name="Lapidus A."/>
            <person name="Barry K."/>
            <person name="Detter J.C."/>
            <person name="Glavina del Rio T."/>
            <person name="Hammon N."/>
            <person name="Israni S."/>
            <person name="Dalin E."/>
            <person name="Tice H."/>
            <person name="Pitluck S."/>
            <person name="Chain P."/>
            <person name="Malfatti S."/>
            <person name="Shin M."/>
            <person name="Vergez L."/>
            <person name="Schmutz J."/>
            <person name="Larimer F."/>
            <person name="Land M."/>
            <person name="Hauser L."/>
            <person name="Kyrpides N."/>
            <person name="Lykidis A."/>
            <person name="Tiedje J."/>
            <person name="Richardson P."/>
        </authorList>
    </citation>
    <scope>NUCLEOTIDE SEQUENCE [LARGE SCALE GENOMIC DNA]</scope>
    <source>
        <strain>W3-18-1</strain>
    </source>
</reference>
<proteinExistence type="inferred from homology"/>
<evidence type="ECO:0000255" key="1">
    <source>
        <dbReference type="HAMAP-Rule" id="MF_00385"/>
    </source>
</evidence>
<evidence type="ECO:0000305" key="2"/>
<dbReference type="EMBL" id="CP000503">
    <property type="protein sequence ID" value="ABM25813.1"/>
    <property type="molecule type" value="Genomic_DNA"/>
</dbReference>
<dbReference type="RefSeq" id="WP_011790265.1">
    <property type="nucleotide sequence ID" value="NC_008750.1"/>
</dbReference>
<dbReference type="SMR" id="A1RMB8"/>
<dbReference type="GeneID" id="67442684"/>
<dbReference type="KEGG" id="shw:Sputw3181_2996"/>
<dbReference type="HOGENOM" id="CLU_100590_5_1_6"/>
<dbReference type="Proteomes" id="UP000002597">
    <property type="component" value="Chromosome"/>
</dbReference>
<dbReference type="GO" id="GO:0005737">
    <property type="term" value="C:cytoplasm"/>
    <property type="evidence" value="ECO:0007669"/>
    <property type="project" value="UniProtKB-ARBA"/>
</dbReference>
<dbReference type="GO" id="GO:0015935">
    <property type="term" value="C:small ribosomal subunit"/>
    <property type="evidence" value="ECO:0007669"/>
    <property type="project" value="TreeGrafter"/>
</dbReference>
<dbReference type="GO" id="GO:0003735">
    <property type="term" value="F:structural constituent of ribosome"/>
    <property type="evidence" value="ECO:0007669"/>
    <property type="project" value="InterPro"/>
</dbReference>
<dbReference type="GO" id="GO:0006412">
    <property type="term" value="P:translation"/>
    <property type="evidence" value="ECO:0007669"/>
    <property type="project" value="UniProtKB-UniRule"/>
</dbReference>
<dbReference type="FunFam" id="3.30.1320.10:FF:000001">
    <property type="entry name" value="30S ribosomal protein S16"/>
    <property type="match status" value="1"/>
</dbReference>
<dbReference type="Gene3D" id="3.30.1320.10">
    <property type="match status" value="1"/>
</dbReference>
<dbReference type="HAMAP" id="MF_00385">
    <property type="entry name" value="Ribosomal_bS16"/>
    <property type="match status" value="1"/>
</dbReference>
<dbReference type="InterPro" id="IPR000307">
    <property type="entry name" value="Ribosomal_bS16"/>
</dbReference>
<dbReference type="InterPro" id="IPR020592">
    <property type="entry name" value="Ribosomal_bS16_CS"/>
</dbReference>
<dbReference type="InterPro" id="IPR023803">
    <property type="entry name" value="Ribosomal_bS16_dom_sf"/>
</dbReference>
<dbReference type="NCBIfam" id="TIGR00002">
    <property type="entry name" value="S16"/>
    <property type="match status" value="1"/>
</dbReference>
<dbReference type="PANTHER" id="PTHR12919">
    <property type="entry name" value="30S RIBOSOMAL PROTEIN S16"/>
    <property type="match status" value="1"/>
</dbReference>
<dbReference type="PANTHER" id="PTHR12919:SF20">
    <property type="entry name" value="SMALL RIBOSOMAL SUBUNIT PROTEIN BS16M"/>
    <property type="match status" value="1"/>
</dbReference>
<dbReference type="Pfam" id="PF00886">
    <property type="entry name" value="Ribosomal_S16"/>
    <property type="match status" value="1"/>
</dbReference>
<dbReference type="SUPFAM" id="SSF54565">
    <property type="entry name" value="Ribosomal protein S16"/>
    <property type="match status" value="1"/>
</dbReference>
<dbReference type="PROSITE" id="PS00732">
    <property type="entry name" value="RIBOSOMAL_S16"/>
    <property type="match status" value="1"/>
</dbReference>
<name>RS16_SHESW</name>
<feature type="chain" id="PRO_1000049352" description="Small ribosomal subunit protein bS16">
    <location>
        <begin position="1"/>
        <end position="83"/>
    </location>
</feature>
<protein>
    <recommendedName>
        <fullName evidence="1">Small ribosomal subunit protein bS16</fullName>
    </recommendedName>
    <alternativeName>
        <fullName evidence="2">30S ribosomal protein S16</fullName>
    </alternativeName>
</protein>
<keyword id="KW-0687">Ribonucleoprotein</keyword>
<keyword id="KW-0689">Ribosomal protein</keyword>
<sequence length="83" mass="9325">MVTIRLARGGAKKRPFYNIVVADSRNARDGRFIERVGFFNPLARGQEETLRLDLARVEHWVSNGAATTERVAKLIKDARKATA</sequence>